<feature type="chain" id="PRO_0000238946" description="Potassium channel regulatory protein">
    <location>
        <begin position="1"/>
        <end position="264"/>
    </location>
</feature>
<feature type="domain" description="BTB">
    <location>
        <begin position="5"/>
        <end position="74"/>
    </location>
</feature>
<feature type="splice variant" id="VSP_019023" description="In isoform 2." evidence="2 3 4">
    <original>ISI</original>
    <variation>FEC</variation>
    <location>
        <begin position="189"/>
        <end position="191"/>
    </location>
</feature>
<feature type="splice variant" id="VSP_019024" description="In isoform 2." evidence="2 3 4">
    <location>
        <begin position="192"/>
        <end position="264"/>
    </location>
</feature>
<keyword id="KW-0025">Alternative splicing</keyword>
<keyword id="KW-0256">Endoplasmic reticulum</keyword>
<keyword id="KW-1185">Reference proteome</keyword>
<gene>
    <name type="primary">Kcnrg</name>
    <name type="synonym">Clld4</name>
</gene>
<reference key="1">
    <citation type="submission" date="2003-12" db="EMBL/GenBank/DDBJ databases">
        <title>Cloning of a murine CLLD4-related cDNA.</title>
        <authorList>
            <person name="Skoldberg F."/>
            <person name="Alimohammadi M."/>
            <person name="Kampe O."/>
        </authorList>
    </citation>
    <scope>NUCLEOTIDE SEQUENCE [MRNA] (ISOFORMS 1 AND 2)</scope>
    <source>
        <tissue>Lung</tissue>
    </source>
</reference>
<reference key="2">
    <citation type="journal article" date="2005" name="Science">
        <title>The transcriptional landscape of the mammalian genome.</title>
        <authorList>
            <person name="Carninci P."/>
            <person name="Kasukawa T."/>
            <person name="Katayama S."/>
            <person name="Gough J."/>
            <person name="Frith M.C."/>
            <person name="Maeda N."/>
            <person name="Oyama R."/>
            <person name="Ravasi T."/>
            <person name="Lenhard B."/>
            <person name="Wells C."/>
            <person name="Kodzius R."/>
            <person name="Shimokawa K."/>
            <person name="Bajic V.B."/>
            <person name="Brenner S.E."/>
            <person name="Batalov S."/>
            <person name="Forrest A.R."/>
            <person name="Zavolan M."/>
            <person name="Davis M.J."/>
            <person name="Wilming L.G."/>
            <person name="Aidinis V."/>
            <person name="Allen J.E."/>
            <person name="Ambesi-Impiombato A."/>
            <person name="Apweiler R."/>
            <person name="Aturaliya R.N."/>
            <person name="Bailey T.L."/>
            <person name="Bansal M."/>
            <person name="Baxter L."/>
            <person name="Beisel K.W."/>
            <person name="Bersano T."/>
            <person name="Bono H."/>
            <person name="Chalk A.M."/>
            <person name="Chiu K.P."/>
            <person name="Choudhary V."/>
            <person name="Christoffels A."/>
            <person name="Clutterbuck D.R."/>
            <person name="Crowe M.L."/>
            <person name="Dalla E."/>
            <person name="Dalrymple B.P."/>
            <person name="de Bono B."/>
            <person name="Della Gatta G."/>
            <person name="di Bernardo D."/>
            <person name="Down T."/>
            <person name="Engstrom P."/>
            <person name="Fagiolini M."/>
            <person name="Faulkner G."/>
            <person name="Fletcher C.F."/>
            <person name="Fukushima T."/>
            <person name="Furuno M."/>
            <person name="Futaki S."/>
            <person name="Gariboldi M."/>
            <person name="Georgii-Hemming P."/>
            <person name="Gingeras T.R."/>
            <person name="Gojobori T."/>
            <person name="Green R.E."/>
            <person name="Gustincich S."/>
            <person name="Harbers M."/>
            <person name="Hayashi Y."/>
            <person name="Hensch T.K."/>
            <person name="Hirokawa N."/>
            <person name="Hill D."/>
            <person name="Huminiecki L."/>
            <person name="Iacono M."/>
            <person name="Ikeo K."/>
            <person name="Iwama A."/>
            <person name="Ishikawa T."/>
            <person name="Jakt M."/>
            <person name="Kanapin A."/>
            <person name="Katoh M."/>
            <person name="Kawasawa Y."/>
            <person name="Kelso J."/>
            <person name="Kitamura H."/>
            <person name="Kitano H."/>
            <person name="Kollias G."/>
            <person name="Krishnan S.P."/>
            <person name="Kruger A."/>
            <person name="Kummerfeld S.K."/>
            <person name="Kurochkin I.V."/>
            <person name="Lareau L.F."/>
            <person name="Lazarevic D."/>
            <person name="Lipovich L."/>
            <person name="Liu J."/>
            <person name="Liuni S."/>
            <person name="McWilliam S."/>
            <person name="Madan Babu M."/>
            <person name="Madera M."/>
            <person name="Marchionni L."/>
            <person name="Matsuda H."/>
            <person name="Matsuzawa S."/>
            <person name="Miki H."/>
            <person name="Mignone F."/>
            <person name="Miyake S."/>
            <person name="Morris K."/>
            <person name="Mottagui-Tabar S."/>
            <person name="Mulder N."/>
            <person name="Nakano N."/>
            <person name="Nakauchi H."/>
            <person name="Ng P."/>
            <person name="Nilsson R."/>
            <person name="Nishiguchi S."/>
            <person name="Nishikawa S."/>
            <person name="Nori F."/>
            <person name="Ohara O."/>
            <person name="Okazaki Y."/>
            <person name="Orlando V."/>
            <person name="Pang K.C."/>
            <person name="Pavan W.J."/>
            <person name="Pavesi G."/>
            <person name="Pesole G."/>
            <person name="Petrovsky N."/>
            <person name="Piazza S."/>
            <person name="Reed J."/>
            <person name="Reid J.F."/>
            <person name="Ring B.Z."/>
            <person name="Ringwald M."/>
            <person name="Rost B."/>
            <person name="Ruan Y."/>
            <person name="Salzberg S.L."/>
            <person name="Sandelin A."/>
            <person name="Schneider C."/>
            <person name="Schoenbach C."/>
            <person name="Sekiguchi K."/>
            <person name="Semple C.A."/>
            <person name="Seno S."/>
            <person name="Sessa L."/>
            <person name="Sheng Y."/>
            <person name="Shibata Y."/>
            <person name="Shimada H."/>
            <person name="Shimada K."/>
            <person name="Silva D."/>
            <person name="Sinclair B."/>
            <person name="Sperling S."/>
            <person name="Stupka E."/>
            <person name="Sugiura K."/>
            <person name="Sultana R."/>
            <person name="Takenaka Y."/>
            <person name="Taki K."/>
            <person name="Tammoja K."/>
            <person name="Tan S.L."/>
            <person name="Tang S."/>
            <person name="Taylor M.S."/>
            <person name="Tegner J."/>
            <person name="Teichmann S.A."/>
            <person name="Ueda H.R."/>
            <person name="van Nimwegen E."/>
            <person name="Verardo R."/>
            <person name="Wei C.L."/>
            <person name="Yagi K."/>
            <person name="Yamanishi H."/>
            <person name="Zabarovsky E."/>
            <person name="Zhu S."/>
            <person name="Zimmer A."/>
            <person name="Hide W."/>
            <person name="Bult C."/>
            <person name="Grimmond S.M."/>
            <person name="Teasdale R.D."/>
            <person name="Liu E.T."/>
            <person name="Brusic V."/>
            <person name="Quackenbush J."/>
            <person name="Wahlestedt C."/>
            <person name="Mattick J.S."/>
            <person name="Hume D.A."/>
            <person name="Kai C."/>
            <person name="Sasaki D."/>
            <person name="Tomaru Y."/>
            <person name="Fukuda S."/>
            <person name="Kanamori-Katayama M."/>
            <person name="Suzuki M."/>
            <person name="Aoki J."/>
            <person name="Arakawa T."/>
            <person name="Iida J."/>
            <person name="Imamura K."/>
            <person name="Itoh M."/>
            <person name="Kato T."/>
            <person name="Kawaji H."/>
            <person name="Kawagashira N."/>
            <person name="Kawashima T."/>
            <person name="Kojima M."/>
            <person name="Kondo S."/>
            <person name="Konno H."/>
            <person name="Nakano K."/>
            <person name="Ninomiya N."/>
            <person name="Nishio T."/>
            <person name="Okada M."/>
            <person name="Plessy C."/>
            <person name="Shibata K."/>
            <person name="Shiraki T."/>
            <person name="Suzuki S."/>
            <person name="Tagami M."/>
            <person name="Waki K."/>
            <person name="Watahiki A."/>
            <person name="Okamura-Oho Y."/>
            <person name="Suzuki H."/>
            <person name="Kawai J."/>
            <person name="Hayashizaki Y."/>
        </authorList>
    </citation>
    <scope>NUCLEOTIDE SEQUENCE [LARGE SCALE MRNA] (ISOFORM 2)</scope>
    <source>
        <strain>C57BL/6J</strain>
        <tissue>Lung</tissue>
    </source>
</reference>
<reference key="3">
    <citation type="journal article" date="2004" name="Genome Res.">
        <title>The status, quality, and expansion of the NIH full-length cDNA project: the Mammalian Gene Collection (MGC).</title>
        <authorList>
            <consortium name="The MGC Project Team"/>
        </authorList>
    </citation>
    <scope>NUCLEOTIDE SEQUENCE [LARGE SCALE MRNA] (ISOFORMS 1 AND 2)</scope>
</reference>
<protein>
    <recommendedName>
        <fullName>Potassium channel regulatory protein</fullName>
        <shortName>Potassium channel regulator</shortName>
    </recommendedName>
    <alternativeName>
        <fullName>Protein CLLD4</fullName>
    </alternativeName>
</protein>
<comment type="function">
    <text evidence="1">Inhibits potassium fluxes in cells. May regulate Kv1 family channel proteins by retaining a fraction of channels in endomembranes (By similarity).</text>
</comment>
<comment type="subunit">
    <text evidence="1">Can form homooligomers. Interacts with KCNA1 (via cytoplasmic N-terminal domain) and KCNA4.</text>
</comment>
<comment type="subcellular location">
    <subcellularLocation>
        <location evidence="1">Endoplasmic reticulum</location>
    </subcellularLocation>
</comment>
<comment type="alternative products">
    <event type="alternative splicing"/>
    <isoform>
        <id>Q2TUM3-1</id>
        <name>1</name>
        <sequence type="displayed"/>
    </isoform>
    <isoform>
        <id>Q2TUM3-3</id>
        <name>2</name>
        <sequence type="described" ref="VSP_019023 VSP_019024"/>
    </isoform>
</comment>
<sequence>MSGQDLVTLNVGGRIFTTRPSTLKQFPASRLAGMLDGRDQEFKTVDGQIFVDRDGALFSFILDFLRNHELLLPSDFADHHRLQREALFYELDSLVDLLSQFLLQSRSAVMEVHFLNQNTQAFFRVFGSCSKTIEMLSGRITMFVERPTALTGNRNSPLALPPQRPSHHDLLFHCGSDGAAENQAGVRYISIKPDNRKLANGTNVLGLLVDTLLKEGFHLVSTRTPASGEKSECYVFERITTPQVLGMSKTPKSETTTMPAPSQK</sequence>
<proteinExistence type="evidence at transcript level"/>
<dbReference type="EMBL" id="AY491736">
    <property type="protein sequence ID" value="AAS72551.1"/>
    <property type="molecule type" value="mRNA"/>
</dbReference>
<dbReference type="EMBL" id="AY491737">
    <property type="protein sequence ID" value="AAS72552.1"/>
    <property type="molecule type" value="mRNA"/>
</dbReference>
<dbReference type="EMBL" id="AK053138">
    <property type="protein sequence ID" value="BAC35277.1"/>
    <property type="molecule type" value="mRNA"/>
</dbReference>
<dbReference type="EMBL" id="BC147091">
    <property type="protein sequence ID" value="AAI47092.1"/>
    <property type="molecule type" value="mRNA"/>
</dbReference>
<dbReference type="EMBL" id="BC147092">
    <property type="protein sequence ID" value="AAI47093.1"/>
    <property type="molecule type" value="mRNA"/>
</dbReference>
<dbReference type="EMBL" id="BC171997">
    <property type="protein sequence ID" value="AAI71997.1"/>
    <property type="molecule type" value="mRNA"/>
</dbReference>
<dbReference type="CCDS" id="CCDS27187.1">
    <molecule id="Q2TUM3-1"/>
</dbReference>
<dbReference type="CCDS" id="CCDS88684.1">
    <molecule id="Q2TUM3-3"/>
</dbReference>
<dbReference type="RefSeq" id="NP_001034194.1">
    <molecule id="Q2TUM3-1"/>
    <property type="nucleotide sequence ID" value="NM_001039105.4"/>
</dbReference>
<dbReference type="RefSeq" id="NP_996857.1">
    <molecule id="Q2TUM3-3"/>
    <property type="nucleotide sequence ID" value="NM_206974.2"/>
</dbReference>
<dbReference type="SMR" id="Q2TUM3"/>
<dbReference type="FunCoup" id="Q2TUM3">
    <property type="interactions" value="184"/>
</dbReference>
<dbReference type="STRING" id="10090.ENSMUSP00000055327"/>
<dbReference type="iPTMnet" id="Q2TUM3"/>
<dbReference type="PhosphoSitePlus" id="Q2TUM3"/>
<dbReference type="PaxDb" id="10090-ENSMUSP00000055327"/>
<dbReference type="ProteomicsDB" id="263418">
    <molecule id="Q2TUM3-1"/>
</dbReference>
<dbReference type="ProteomicsDB" id="263419">
    <molecule id="Q2TUM3-3"/>
</dbReference>
<dbReference type="Antibodypedia" id="637">
    <property type="antibodies" value="132 antibodies from 21 providers"/>
</dbReference>
<dbReference type="DNASU" id="328424"/>
<dbReference type="Ensembl" id="ENSMUST00000051184.10">
    <molecule id="Q2TUM3-1"/>
    <property type="protein sequence ID" value="ENSMUSP00000055327.9"/>
    <property type="gene ID" value="ENSMUSG00000046168.10"/>
</dbReference>
<dbReference type="Ensembl" id="ENSMUST00000225582.2">
    <molecule id="Q2TUM3-3"/>
    <property type="protein sequence ID" value="ENSMUSP00000153429.2"/>
    <property type="gene ID" value="ENSMUSG00000046168.10"/>
</dbReference>
<dbReference type="GeneID" id="328424"/>
<dbReference type="KEGG" id="mmu:328424"/>
<dbReference type="UCSC" id="uc007ugd.1">
    <molecule id="Q2TUM3-3"/>
    <property type="organism name" value="mouse"/>
</dbReference>
<dbReference type="UCSC" id="uc007uge.2">
    <molecule id="Q2TUM3-1"/>
    <property type="organism name" value="mouse"/>
</dbReference>
<dbReference type="AGR" id="MGI:2685591"/>
<dbReference type="CTD" id="283518"/>
<dbReference type="MGI" id="MGI:2685591">
    <property type="gene designation" value="Kcnrg"/>
</dbReference>
<dbReference type="VEuPathDB" id="HostDB:ENSMUSG00000046168"/>
<dbReference type="eggNOG" id="KOG2723">
    <property type="taxonomic scope" value="Eukaryota"/>
</dbReference>
<dbReference type="GeneTree" id="ENSGT00940000161898"/>
<dbReference type="HOGENOM" id="CLU_087954_0_0_1"/>
<dbReference type="InParanoid" id="Q2TUM3"/>
<dbReference type="OMA" id="SYIMDFL"/>
<dbReference type="OrthoDB" id="10025005at2759"/>
<dbReference type="PhylomeDB" id="Q2TUM3"/>
<dbReference type="TreeFam" id="TF315332"/>
<dbReference type="BioGRID-ORCS" id="328424">
    <property type="hits" value="2 hits in 76 CRISPR screens"/>
</dbReference>
<dbReference type="PRO" id="PR:Q2TUM3"/>
<dbReference type="Proteomes" id="UP000000589">
    <property type="component" value="Chromosome 14"/>
</dbReference>
<dbReference type="RNAct" id="Q2TUM3">
    <property type="molecule type" value="protein"/>
</dbReference>
<dbReference type="Bgee" id="ENSMUSG00000046168">
    <property type="expression patterns" value="Expressed in embryonic cell in blastocyst and 60 other cell types or tissues"/>
</dbReference>
<dbReference type="GO" id="GO:0005783">
    <property type="term" value="C:endoplasmic reticulum"/>
    <property type="evidence" value="ECO:0000250"/>
    <property type="project" value="UniProtKB"/>
</dbReference>
<dbReference type="GO" id="GO:0042802">
    <property type="term" value="F:identical protein binding"/>
    <property type="evidence" value="ECO:0007669"/>
    <property type="project" value="Ensembl"/>
</dbReference>
<dbReference type="GO" id="GO:1902260">
    <property type="term" value="P:negative regulation of delayed rectifier potassium channel activity"/>
    <property type="evidence" value="ECO:0000250"/>
    <property type="project" value="UniProtKB"/>
</dbReference>
<dbReference type="GO" id="GO:0051260">
    <property type="term" value="P:protein homooligomerization"/>
    <property type="evidence" value="ECO:0007669"/>
    <property type="project" value="InterPro"/>
</dbReference>
<dbReference type="FunFam" id="3.30.710.10:FF:000114">
    <property type="entry name" value="potassium channel regulatory protein"/>
    <property type="match status" value="1"/>
</dbReference>
<dbReference type="Gene3D" id="3.30.710.10">
    <property type="entry name" value="Potassium Channel Kv1.1, Chain A"/>
    <property type="match status" value="1"/>
</dbReference>
<dbReference type="InterPro" id="IPR000210">
    <property type="entry name" value="BTB/POZ_dom"/>
</dbReference>
<dbReference type="InterPro" id="IPR011333">
    <property type="entry name" value="SKP1/BTB/POZ_sf"/>
</dbReference>
<dbReference type="InterPro" id="IPR003131">
    <property type="entry name" value="T1-type_BTB"/>
</dbReference>
<dbReference type="PANTHER" id="PTHR14499:SF5">
    <property type="entry name" value="POTASSIUM CHANNEL REGULATORY PROTEIN"/>
    <property type="match status" value="1"/>
</dbReference>
<dbReference type="PANTHER" id="PTHR14499">
    <property type="entry name" value="POTASSIUM CHANNEL TETRAMERIZATION DOMAIN-CONTAINING"/>
    <property type="match status" value="1"/>
</dbReference>
<dbReference type="Pfam" id="PF02214">
    <property type="entry name" value="BTB_2"/>
    <property type="match status" value="1"/>
</dbReference>
<dbReference type="SMART" id="SM00225">
    <property type="entry name" value="BTB"/>
    <property type="match status" value="1"/>
</dbReference>
<dbReference type="SUPFAM" id="SSF54695">
    <property type="entry name" value="POZ domain"/>
    <property type="match status" value="1"/>
</dbReference>
<name>KCNRG_MOUSE</name>
<organism>
    <name type="scientific">Mus musculus</name>
    <name type="common">Mouse</name>
    <dbReference type="NCBI Taxonomy" id="10090"/>
    <lineage>
        <taxon>Eukaryota</taxon>
        <taxon>Metazoa</taxon>
        <taxon>Chordata</taxon>
        <taxon>Craniata</taxon>
        <taxon>Vertebrata</taxon>
        <taxon>Euteleostomi</taxon>
        <taxon>Mammalia</taxon>
        <taxon>Eutheria</taxon>
        <taxon>Euarchontoglires</taxon>
        <taxon>Glires</taxon>
        <taxon>Rodentia</taxon>
        <taxon>Myomorpha</taxon>
        <taxon>Muroidea</taxon>
        <taxon>Muridae</taxon>
        <taxon>Murinae</taxon>
        <taxon>Mus</taxon>
        <taxon>Mus</taxon>
    </lineage>
</organism>
<evidence type="ECO:0000250" key="1">
    <source>
        <dbReference type="UniProtKB" id="Q8N5I3"/>
    </source>
</evidence>
<evidence type="ECO:0000303" key="2">
    <source>
    </source>
</evidence>
<evidence type="ECO:0000303" key="3">
    <source>
    </source>
</evidence>
<evidence type="ECO:0000303" key="4">
    <source ref="1"/>
</evidence>
<accession>Q2TUM3</accession>
<accession>B2RV87</accession>
<accession>B7ZWD9</accession>
<accession>Q6P8J6</accession>
<accession>Q8C6V1</accession>